<gene>
    <name type="ORF">VDBG_03509</name>
</gene>
<protein>
    <recommendedName>
        <fullName evidence="1">Glutamyl-tRNA(Gln) amidotransferase subunit B, mitochondrial</fullName>
        <shortName evidence="1">Glu-AdT subunit B</shortName>
        <ecNumber evidence="1">6.3.5.-</ecNumber>
    </recommendedName>
</protein>
<evidence type="ECO:0000255" key="1">
    <source>
        <dbReference type="HAMAP-Rule" id="MF_03147"/>
    </source>
</evidence>
<evidence type="ECO:0000256" key="2">
    <source>
        <dbReference type="SAM" id="MobiDB-lite"/>
    </source>
</evidence>
<dbReference type="EC" id="6.3.5.-" evidence="1"/>
<dbReference type="EMBL" id="DS985217">
    <property type="protein sequence ID" value="EEY17400.1"/>
    <property type="molecule type" value="Genomic_DNA"/>
</dbReference>
<dbReference type="RefSeq" id="XP_003005556.1">
    <property type="nucleotide sequence ID" value="XM_003005510.1"/>
</dbReference>
<dbReference type="SMR" id="C9SFZ6"/>
<dbReference type="STRING" id="526221.C9SFZ6"/>
<dbReference type="GeneID" id="9532241"/>
<dbReference type="KEGG" id="val:VDBG_03509"/>
<dbReference type="eggNOG" id="KOG2438">
    <property type="taxonomic scope" value="Eukaryota"/>
</dbReference>
<dbReference type="HOGENOM" id="CLU_019240_4_1_1"/>
<dbReference type="OMA" id="ARKWWMG"/>
<dbReference type="OrthoDB" id="1722066at2759"/>
<dbReference type="Proteomes" id="UP000008698">
    <property type="component" value="Unassembled WGS sequence"/>
</dbReference>
<dbReference type="GO" id="GO:0030956">
    <property type="term" value="C:glutamyl-tRNA(Gln) amidotransferase complex"/>
    <property type="evidence" value="ECO:0007669"/>
    <property type="project" value="UniProtKB-UniRule"/>
</dbReference>
<dbReference type="GO" id="GO:0005739">
    <property type="term" value="C:mitochondrion"/>
    <property type="evidence" value="ECO:0007669"/>
    <property type="project" value="UniProtKB-SubCell"/>
</dbReference>
<dbReference type="GO" id="GO:0005524">
    <property type="term" value="F:ATP binding"/>
    <property type="evidence" value="ECO:0007669"/>
    <property type="project" value="UniProtKB-KW"/>
</dbReference>
<dbReference type="GO" id="GO:0050567">
    <property type="term" value="F:glutaminyl-tRNA synthase (glutamine-hydrolyzing) activity"/>
    <property type="evidence" value="ECO:0007669"/>
    <property type="project" value="UniProtKB-UniRule"/>
</dbReference>
<dbReference type="GO" id="GO:0070681">
    <property type="term" value="P:glutaminyl-tRNAGln biosynthesis via transamidation"/>
    <property type="evidence" value="ECO:0007669"/>
    <property type="project" value="UniProtKB-UniRule"/>
</dbReference>
<dbReference type="GO" id="GO:0032543">
    <property type="term" value="P:mitochondrial translation"/>
    <property type="evidence" value="ECO:0007669"/>
    <property type="project" value="UniProtKB-UniRule"/>
</dbReference>
<dbReference type="HAMAP" id="MF_00121">
    <property type="entry name" value="GatB"/>
    <property type="match status" value="1"/>
</dbReference>
<dbReference type="InterPro" id="IPR017959">
    <property type="entry name" value="Asn/Gln-tRNA_amidoTrfase_suB/E"/>
</dbReference>
<dbReference type="InterPro" id="IPR006075">
    <property type="entry name" value="Asn/Gln-tRNA_Trfase_suB/E_cat"/>
</dbReference>
<dbReference type="InterPro" id="IPR018027">
    <property type="entry name" value="Asn/Gln_amidotransferase"/>
</dbReference>
<dbReference type="InterPro" id="IPR003789">
    <property type="entry name" value="Asn/Gln_tRNA_amidoTrase-B-like"/>
</dbReference>
<dbReference type="InterPro" id="IPR004413">
    <property type="entry name" value="GatB"/>
</dbReference>
<dbReference type="InterPro" id="IPR017958">
    <property type="entry name" value="Gln-tRNA_amidoTrfase_suB_CS"/>
</dbReference>
<dbReference type="InterPro" id="IPR014746">
    <property type="entry name" value="Gln_synth/guanido_kin_cat_dom"/>
</dbReference>
<dbReference type="NCBIfam" id="TIGR00133">
    <property type="entry name" value="gatB"/>
    <property type="match status" value="1"/>
</dbReference>
<dbReference type="NCBIfam" id="NF004012">
    <property type="entry name" value="PRK05477.1-2"/>
    <property type="match status" value="1"/>
</dbReference>
<dbReference type="PANTHER" id="PTHR11659">
    <property type="entry name" value="GLUTAMYL-TRNA GLN AMIDOTRANSFERASE SUBUNIT B MITOCHONDRIAL AND PROKARYOTIC PET112-RELATED"/>
    <property type="match status" value="1"/>
</dbReference>
<dbReference type="PANTHER" id="PTHR11659:SF0">
    <property type="entry name" value="GLUTAMYL-TRNA(GLN) AMIDOTRANSFERASE SUBUNIT B, MITOCHONDRIAL"/>
    <property type="match status" value="1"/>
</dbReference>
<dbReference type="Pfam" id="PF02934">
    <property type="entry name" value="GatB_N"/>
    <property type="match status" value="1"/>
</dbReference>
<dbReference type="Pfam" id="PF02637">
    <property type="entry name" value="GatB_Yqey"/>
    <property type="match status" value="1"/>
</dbReference>
<dbReference type="SMART" id="SM00845">
    <property type="entry name" value="GatB_Yqey"/>
    <property type="match status" value="1"/>
</dbReference>
<dbReference type="SUPFAM" id="SSF89095">
    <property type="entry name" value="GatB/YqeY motif"/>
    <property type="match status" value="1"/>
</dbReference>
<dbReference type="SUPFAM" id="SSF55931">
    <property type="entry name" value="Glutamine synthetase/guanido kinase"/>
    <property type="match status" value="1"/>
</dbReference>
<dbReference type="PROSITE" id="PS01234">
    <property type="entry name" value="GATB"/>
    <property type="match status" value="1"/>
</dbReference>
<reference key="1">
    <citation type="journal article" date="2011" name="PLoS Pathog.">
        <title>Comparative genomics yields insights into niche adaptation of plant vascular wilt pathogens.</title>
        <authorList>
            <person name="Klosterman S.J."/>
            <person name="Subbarao K.V."/>
            <person name="Kang S."/>
            <person name="Veronese P."/>
            <person name="Gold S.E."/>
            <person name="Thomma B.P.H.J."/>
            <person name="Chen Z."/>
            <person name="Henrissat B."/>
            <person name="Lee Y.-H."/>
            <person name="Park J."/>
            <person name="Garcia-Pedrajas M.D."/>
            <person name="Barbara D.J."/>
            <person name="Anchieta A."/>
            <person name="de Jonge R."/>
            <person name="Santhanam P."/>
            <person name="Maruthachalam K."/>
            <person name="Atallah Z."/>
            <person name="Amyotte S.G."/>
            <person name="Paz Z."/>
            <person name="Inderbitzin P."/>
            <person name="Hayes R.J."/>
            <person name="Heiman D.I."/>
            <person name="Young S."/>
            <person name="Zeng Q."/>
            <person name="Engels R."/>
            <person name="Galagan J."/>
            <person name="Cuomo C.A."/>
            <person name="Dobinson K.F."/>
            <person name="Ma L.-J."/>
        </authorList>
    </citation>
    <scope>NUCLEOTIDE SEQUENCE [LARGE SCALE GENOMIC DNA]</scope>
    <source>
        <strain>VaMs.102 / ATCC MYA-4576 / FGSC 10136</strain>
    </source>
</reference>
<sequence>MSRIPTRELGRYLLQGQICQRGCVASSVSKSRAKQLGRHPLLPHDRHQPTQARHAHTVTTTATPTQLAPSVPLRKKLKDEAKQLKKNAKKDNRKGSNQTVDGWELTVGIEIHAQLNTARKLFSPAATSFNDAPNSHVALFDLSMPGSQPLLQKETLIPALRAALALNCDIQPISRFDRKHYFWWDQPSGYQITQYYEPFARNGQITLFARDGIAPEDGESVTIGIQQVQMEQDTAKTLAQPGDTHWLDFNRVGVPLIEIITKPELHHPRTAAVFVRKMQTLLNAVDACVSGMETGGLRADVNVSVRRTSDASAPLGTRTEIKNLSTIKAVEDAIIAERDRQIQELEAGGTIAGETRGWTLGTKQTRRLRGKEGEVDYRYMPDPDLGPLIIADDLVDHIRKSVAYLPDHELSELADVYGLTAKDALSLLSLDNGGRIEYFYNVVESFGTRLQQGTEGGLDVRAYAPLAANWILHEFGRLVDDDSDNESTPFEVSPDGQCERVPVESLAELLFHLQQKKITGKVAKELLTALHQGNLADAENITAAIDAHDLWFHELSTEEYQELAALAVEGEDKVLREFRDKKVFPQGKLMYLVGKMLRLGATERIDPSNAEKFMRAKVEELL</sequence>
<comment type="function">
    <text evidence="1">Allows the formation of correctly charged Gln-tRNA(Gln) through the transamidation of misacylated Glu-tRNA(Gln) in the mitochondria. The reaction takes place in the presence of glutamine and ATP through an activated gamma-phospho-Glu-tRNA(Gln).</text>
</comment>
<comment type="catalytic activity">
    <reaction evidence="1">
        <text>L-glutamyl-tRNA(Gln) + L-glutamine + ATP + H2O = L-glutaminyl-tRNA(Gln) + L-glutamate + ADP + phosphate + H(+)</text>
        <dbReference type="Rhea" id="RHEA:17521"/>
        <dbReference type="Rhea" id="RHEA-COMP:9681"/>
        <dbReference type="Rhea" id="RHEA-COMP:9684"/>
        <dbReference type="ChEBI" id="CHEBI:15377"/>
        <dbReference type="ChEBI" id="CHEBI:15378"/>
        <dbReference type="ChEBI" id="CHEBI:29985"/>
        <dbReference type="ChEBI" id="CHEBI:30616"/>
        <dbReference type="ChEBI" id="CHEBI:43474"/>
        <dbReference type="ChEBI" id="CHEBI:58359"/>
        <dbReference type="ChEBI" id="CHEBI:78520"/>
        <dbReference type="ChEBI" id="CHEBI:78521"/>
        <dbReference type="ChEBI" id="CHEBI:456216"/>
    </reaction>
</comment>
<comment type="subunit">
    <text evidence="1">Subunit of the heterotrimeric GatCAB amidotransferase (AdT) complex, composed of A, B and C subunits.</text>
</comment>
<comment type="subcellular location">
    <subcellularLocation>
        <location evidence="1">Mitochondrion</location>
    </subcellularLocation>
</comment>
<comment type="similarity">
    <text evidence="1">Belongs to the GatB/GatE family. GatB subfamily.</text>
</comment>
<feature type="transit peptide" description="Mitochondrion" evidence="1">
    <location>
        <begin position="1"/>
        <end position="54"/>
    </location>
</feature>
<feature type="chain" id="PRO_0000413284" description="Glutamyl-tRNA(Gln) amidotransferase subunit B, mitochondrial">
    <location>
        <begin position="55"/>
        <end position="622"/>
    </location>
</feature>
<feature type="region of interest" description="Disordered" evidence="2">
    <location>
        <begin position="30"/>
        <end position="67"/>
    </location>
</feature>
<feature type="compositionally biased region" description="Low complexity" evidence="2">
    <location>
        <begin position="57"/>
        <end position="67"/>
    </location>
</feature>
<organism>
    <name type="scientific">Verticillium alfalfae (strain VaMs.102 / ATCC MYA-4576 / FGSC 10136)</name>
    <name type="common">Verticillium wilt of alfalfa</name>
    <name type="synonym">Verticillium albo-atrum</name>
    <dbReference type="NCBI Taxonomy" id="526221"/>
    <lineage>
        <taxon>Eukaryota</taxon>
        <taxon>Fungi</taxon>
        <taxon>Dikarya</taxon>
        <taxon>Ascomycota</taxon>
        <taxon>Pezizomycotina</taxon>
        <taxon>Sordariomycetes</taxon>
        <taxon>Hypocreomycetidae</taxon>
        <taxon>Glomerellales</taxon>
        <taxon>Plectosphaerellaceae</taxon>
        <taxon>Verticillium</taxon>
    </lineage>
</organism>
<name>GATB_VERA1</name>
<proteinExistence type="inferred from homology"/>
<accession>C9SFZ6</accession>
<keyword id="KW-0067">ATP-binding</keyword>
<keyword id="KW-0436">Ligase</keyword>
<keyword id="KW-0496">Mitochondrion</keyword>
<keyword id="KW-0547">Nucleotide-binding</keyword>
<keyword id="KW-0648">Protein biosynthesis</keyword>
<keyword id="KW-1185">Reference proteome</keyword>
<keyword id="KW-0809">Transit peptide</keyword>